<reference key="1">
    <citation type="journal article" date="2004" name="J. Bacteriol.">
        <title>The genome sequence of Mycoplasma hyopneumoniae strain 232, the agent of swine mycoplasmosis.</title>
        <authorList>
            <person name="Minion F.C."/>
            <person name="Lefkowitz E.J."/>
            <person name="Madsen M.L."/>
            <person name="Cleary B.J."/>
            <person name="Swartzell S.M."/>
            <person name="Mahairas G.G."/>
        </authorList>
    </citation>
    <scope>NUCLEOTIDE SEQUENCE [LARGE SCALE GENOMIC DNA]</scope>
    <source>
        <strain>232</strain>
    </source>
</reference>
<gene>
    <name evidence="1" type="primary">rpoA</name>
    <name type="ordered locus">mhp213</name>
</gene>
<keyword id="KW-0240">DNA-directed RNA polymerase</keyword>
<keyword id="KW-0548">Nucleotidyltransferase</keyword>
<keyword id="KW-0804">Transcription</keyword>
<keyword id="KW-0808">Transferase</keyword>
<feature type="chain" id="PRO_0000225280" description="DNA-directed RNA polymerase subunit alpha">
    <location>
        <begin position="1"/>
        <end position="332"/>
    </location>
</feature>
<feature type="region of interest" description="Alpha N-terminal domain (alpha-NTD)" evidence="1">
    <location>
        <begin position="1"/>
        <end position="244"/>
    </location>
</feature>
<feature type="region of interest" description="Alpha C-terminal domain (alpha-CTD)" evidence="1">
    <location>
        <begin position="259"/>
        <end position="332"/>
    </location>
</feature>
<sequence>MKKHAKVYYSENLVEQVNEFETSFEIKPLERGLGNTLGNALRRTVLSSIPSCAVFGVKIEGIKHEFTVLDDVIEDVVTILNNLKRVRFFYNPSVFSQNSIHVASFLGQKAGQIYARDIESHSGLKIVNPDLYIADVSKVGALKFELFITNGKGFVDFETNKKYVNEVISLLESQIEGSVLAVDSDFSPVLNANYQAVEINSASPIIEEKLNFSIKTDGSIFAKDALSQGAKILIAHLNLLADVENLNKFSADFFGDQEIKEEPIRRFSNSIDALDLSVRSLNALRRAQYYKISDIEKLSQDDFENIKNLGRKSVQEIMEKLQNYKNENKGEN</sequence>
<dbReference type="EC" id="2.7.7.6" evidence="1"/>
<dbReference type="EMBL" id="AE017332">
    <property type="protein sequence ID" value="AAV27469.1"/>
    <property type="molecule type" value="Genomic_DNA"/>
</dbReference>
<dbReference type="RefSeq" id="WP_011206050.1">
    <property type="nucleotide sequence ID" value="NC_006360.1"/>
</dbReference>
<dbReference type="SMR" id="Q601I9"/>
<dbReference type="GeneID" id="41334467"/>
<dbReference type="KEGG" id="mhy:mhp213"/>
<dbReference type="eggNOG" id="COG0202">
    <property type="taxonomic scope" value="Bacteria"/>
</dbReference>
<dbReference type="HOGENOM" id="CLU_053084_0_1_14"/>
<dbReference type="PhylomeDB" id="Q601I9"/>
<dbReference type="Proteomes" id="UP000006822">
    <property type="component" value="Chromosome"/>
</dbReference>
<dbReference type="GO" id="GO:0005737">
    <property type="term" value="C:cytoplasm"/>
    <property type="evidence" value="ECO:0007669"/>
    <property type="project" value="UniProtKB-ARBA"/>
</dbReference>
<dbReference type="GO" id="GO:0000428">
    <property type="term" value="C:DNA-directed RNA polymerase complex"/>
    <property type="evidence" value="ECO:0007669"/>
    <property type="project" value="UniProtKB-KW"/>
</dbReference>
<dbReference type="GO" id="GO:0003677">
    <property type="term" value="F:DNA binding"/>
    <property type="evidence" value="ECO:0007669"/>
    <property type="project" value="UniProtKB-UniRule"/>
</dbReference>
<dbReference type="GO" id="GO:0003899">
    <property type="term" value="F:DNA-directed RNA polymerase activity"/>
    <property type="evidence" value="ECO:0007669"/>
    <property type="project" value="UniProtKB-UniRule"/>
</dbReference>
<dbReference type="GO" id="GO:0046983">
    <property type="term" value="F:protein dimerization activity"/>
    <property type="evidence" value="ECO:0007669"/>
    <property type="project" value="InterPro"/>
</dbReference>
<dbReference type="GO" id="GO:0006351">
    <property type="term" value="P:DNA-templated transcription"/>
    <property type="evidence" value="ECO:0007669"/>
    <property type="project" value="UniProtKB-UniRule"/>
</dbReference>
<dbReference type="CDD" id="cd06928">
    <property type="entry name" value="RNAP_alpha_NTD"/>
    <property type="match status" value="1"/>
</dbReference>
<dbReference type="Gene3D" id="1.10.150.20">
    <property type="entry name" value="5' to 3' exonuclease, C-terminal subdomain"/>
    <property type="match status" value="1"/>
</dbReference>
<dbReference type="Gene3D" id="2.170.120.12">
    <property type="entry name" value="DNA-directed RNA polymerase, insert domain"/>
    <property type="match status" value="1"/>
</dbReference>
<dbReference type="Gene3D" id="3.30.1360.10">
    <property type="entry name" value="RNA polymerase, RBP11-like subunit"/>
    <property type="match status" value="1"/>
</dbReference>
<dbReference type="HAMAP" id="MF_00059">
    <property type="entry name" value="RNApol_bact_RpoA"/>
    <property type="match status" value="1"/>
</dbReference>
<dbReference type="InterPro" id="IPR011262">
    <property type="entry name" value="DNA-dir_RNA_pol_insert"/>
</dbReference>
<dbReference type="InterPro" id="IPR011263">
    <property type="entry name" value="DNA-dir_RNA_pol_RpoA/D/Rpb3"/>
</dbReference>
<dbReference type="InterPro" id="IPR011773">
    <property type="entry name" value="DNA-dir_RpoA"/>
</dbReference>
<dbReference type="InterPro" id="IPR036603">
    <property type="entry name" value="RBP11-like"/>
</dbReference>
<dbReference type="InterPro" id="IPR011260">
    <property type="entry name" value="RNAP_asu_C"/>
</dbReference>
<dbReference type="InterPro" id="IPR036643">
    <property type="entry name" value="RNApol_insert_sf"/>
</dbReference>
<dbReference type="NCBIfam" id="NF003519">
    <property type="entry name" value="PRK05182.2-5"/>
    <property type="match status" value="1"/>
</dbReference>
<dbReference type="NCBIfam" id="TIGR02027">
    <property type="entry name" value="rpoA"/>
    <property type="match status" value="1"/>
</dbReference>
<dbReference type="Pfam" id="PF01000">
    <property type="entry name" value="RNA_pol_A_bac"/>
    <property type="match status" value="1"/>
</dbReference>
<dbReference type="Pfam" id="PF03118">
    <property type="entry name" value="RNA_pol_A_CTD"/>
    <property type="match status" value="1"/>
</dbReference>
<dbReference type="Pfam" id="PF01193">
    <property type="entry name" value="RNA_pol_L"/>
    <property type="match status" value="1"/>
</dbReference>
<dbReference type="SMART" id="SM00662">
    <property type="entry name" value="RPOLD"/>
    <property type="match status" value="1"/>
</dbReference>
<dbReference type="SUPFAM" id="SSF47789">
    <property type="entry name" value="C-terminal domain of RNA polymerase alpha subunit"/>
    <property type="match status" value="1"/>
</dbReference>
<dbReference type="SUPFAM" id="SSF56553">
    <property type="entry name" value="Insert subdomain of RNA polymerase alpha subunit"/>
    <property type="match status" value="1"/>
</dbReference>
<dbReference type="SUPFAM" id="SSF55257">
    <property type="entry name" value="RBP11-like subunits of RNA polymerase"/>
    <property type="match status" value="1"/>
</dbReference>
<comment type="function">
    <text evidence="1">DNA-dependent RNA polymerase catalyzes the transcription of DNA into RNA using the four ribonucleoside triphosphates as substrates.</text>
</comment>
<comment type="catalytic activity">
    <reaction evidence="1">
        <text>RNA(n) + a ribonucleoside 5'-triphosphate = RNA(n+1) + diphosphate</text>
        <dbReference type="Rhea" id="RHEA:21248"/>
        <dbReference type="Rhea" id="RHEA-COMP:14527"/>
        <dbReference type="Rhea" id="RHEA-COMP:17342"/>
        <dbReference type="ChEBI" id="CHEBI:33019"/>
        <dbReference type="ChEBI" id="CHEBI:61557"/>
        <dbReference type="ChEBI" id="CHEBI:140395"/>
        <dbReference type="EC" id="2.7.7.6"/>
    </reaction>
</comment>
<comment type="subunit">
    <text evidence="1">Homodimer. The RNAP catalytic core consists of 2 alpha, 1 beta, 1 beta' and 1 omega subunit. When a sigma factor is associated with the core the holoenzyme is formed, which can initiate transcription.</text>
</comment>
<comment type="domain">
    <text evidence="1">The N-terminal domain is essential for RNAP assembly and basal transcription, whereas the C-terminal domain is involved in interaction with transcriptional regulators and with upstream promoter elements.</text>
</comment>
<comment type="similarity">
    <text evidence="1">Belongs to the RNA polymerase alpha chain family.</text>
</comment>
<proteinExistence type="inferred from homology"/>
<organism>
    <name type="scientific">Mesomycoplasma hyopneumoniae (strain 232)</name>
    <name type="common">Mycoplasma hyopneumoniae</name>
    <dbReference type="NCBI Taxonomy" id="295358"/>
    <lineage>
        <taxon>Bacteria</taxon>
        <taxon>Bacillati</taxon>
        <taxon>Mycoplasmatota</taxon>
        <taxon>Mycoplasmoidales</taxon>
        <taxon>Metamycoplasmataceae</taxon>
        <taxon>Mesomycoplasma</taxon>
    </lineage>
</organism>
<accession>Q601I9</accession>
<name>RPOA_MESH2</name>
<protein>
    <recommendedName>
        <fullName evidence="1">DNA-directed RNA polymerase subunit alpha</fullName>
        <shortName evidence="1">RNAP subunit alpha</shortName>
        <ecNumber evidence="1">2.7.7.6</ecNumber>
    </recommendedName>
    <alternativeName>
        <fullName evidence="1">RNA polymerase subunit alpha</fullName>
    </alternativeName>
    <alternativeName>
        <fullName evidence="1">Transcriptase subunit alpha</fullName>
    </alternativeName>
</protein>
<evidence type="ECO:0000255" key="1">
    <source>
        <dbReference type="HAMAP-Rule" id="MF_00059"/>
    </source>
</evidence>